<dbReference type="EMBL" id="X14855">
    <property type="protein sequence ID" value="CAA32999.1"/>
    <property type="molecule type" value="Genomic_DNA"/>
</dbReference>
<dbReference type="Proteomes" id="UP000009250">
    <property type="component" value="Genome"/>
</dbReference>
<reference key="1">
    <citation type="submission" date="1989-03" db="EMBL/GenBank/DDBJ databases">
        <authorList>
            <person name="Neumann H."/>
        </authorList>
    </citation>
    <scope>NUCLEOTIDE SEQUENCE [GENOMIC DNA]</scope>
</reference>
<organism>
    <name type="scientific">Thermoproteus tenax virus 1 (strain KRA1)</name>
    <name type="common">TTV1</name>
    <dbReference type="NCBI Taxonomy" id="10480"/>
    <lineage>
        <taxon>Viruses</taxon>
        <taxon>Adnaviria</taxon>
        <taxon>Zilligvirae</taxon>
        <taxon>Taleaviricota</taxon>
        <taxon>Tokiviricetes</taxon>
        <taxon>Primavirales</taxon>
        <taxon>Tristromaviridae</taxon>
        <taxon>Betatristromavirus</taxon>
        <taxon>Betatristromavirus TTV1</taxon>
    </lineage>
</organism>
<proteinExistence type="predicted"/>
<organismHost>
    <name type="scientific">Thermoproteus tenax</name>
    <dbReference type="NCBI Taxonomy" id="2271"/>
</organismHost>
<sequence length="76" mass="8756">MIFHKDSRTIDLDYGHIIMGIERKSRGNYDLYILIKKEGKFEVDSIFTGDVMVVDRGSFVSTSRGFPMLLVEVPDR</sequence>
<name>YORS_TTV1K</name>
<protein>
    <recommendedName>
        <fullName>Uncharacterized 8.8 kDa protein</fullName>
    </recommendedName>
</protein>
<accession>P19303</accession>
<keyword id="KW-1185">Reference proteome</keyword>
<feature type="chain" id="PRO_0000222985" description="Uncharacterized 8.8 kDa protein">
    <location>
        <begin position="1"/>
        <end position="76"/>
    </location>
</feature>